<organism>
    <name type="scientific">Caenorhabditis elegans</name>
    <dbReference type="NCBI Taxonomy" id="6239"/>
    <lineage>
        <taxon>Eukaryota</taxon>
        <taxon>Metazoa</taxon>
        <taxon>Ecdysozoa</taxon>
        <taxon>Nematoda</taxon>
        <taxon>Chromadorea</taxon>
        <taxon>Rhabditida</taxon>
        <taxon>Rhabditina</taxon>
        <taxon>Rhabditomorpha</taxon>
        <taxon>Rhabditoidea</taxon>
        <taxon>Rhabditidae</taxon>
        <taxon>Peloderinae</taxon>
        <taxon>Caenorhabditis</taxon>
    </lineage>
</organism>
<evidence type="ECO:0000255" key="1"/>
<evidence type="ECO:0000255" key="2">
    <source>
        <dbReference type="PROSITE-ProRule" id="PRU00521"/>
    </source>
</evidence>
<evidence type="ECO:0000256" key="3">
    <source>
        <dbReference type="SAM" id="MobiDB-lite"/>
    </source>
</evidence>
<evidence type="ECO:0000269" key="4">
    <source>
    </source>
</evidence>
<evidence type="ECO:0000305" key="5"/>
<accession>Q19084</accession>
<accession>Q3S1M1</accession>
<accession>Q7Z290</accession>
<comment type="function">
    <text evidence="4">G-protein coupled receptor for tyramine, a known neurotransmitter and neuromodulator and direct precursor of octopamine. Expression in amphidial sensory neurons suggests a role in chemosensation.</text>
</comment>
<comment type="subcellular location">
    <subcellularLocation>
        <location evidence="5">Cell membrane</location>
        <topology evidence="5">Multi-pass membrane protein</topology>
    </subcellularLocation>
</comment>
<comment type="alternative products">
    <event type="alternative splicing"/>
    <isoform>
        <id>Q19084-1</id>
        <name>c</name>
        <sequence type="displayed"/>
    </isoform>
    <isoform>
        <id>Q19084-2</id>
        <name>a</name>
        <sequence type="described" ref="VSP_018118"/>
    </isoform>
    <isoform>
        <id>Q19084-3</id>
        <name>b</name>
        <sequence type="described" ref="VSP_018117"/>
    </isoform>
</comment>
<comment type="tissue specificity">
    <text evidence="4">Expressed in the pharyngeal neurons, MCL/R and NSML/R and the AS group of amphidial sensory neurons, ASEL/R, AGSL/R, ASHL/R and ASIL/R.</text>
</comment>
<comment type="similarity">
    <text evidence="2">Belongs to the G-protein coupled receptor 1 family.</text>
</comment>
<dbReference type="EMBL" id="FO080572">
    <property type="protein sequence ID" value="CCD83463.1"/>
    <property type="molecule type" value="Genomic_DNA"/>
</dbReference>
<dbReference type="EMBL" id="FO080572">
    <property type="protein sequence ID" value="CCD83464.1"/>
    <property type="molecule type" value="Genomic_DNA"/>
</dbReference>
<dbReference type="EMBL" id="FO080572">
    <property type="protein sequence ID" value="CCD83465.1"/>
    <property type="molecule type" value="Genomic_DNA"/>
</dbReference>
<dbReference type="PIR" id="T15941">
    <property type="entry name" value="T15941"/>
</dbReference>
<dbReference type="RefSeq" id="NP_001024521.1">
    <molecule id="Q19084-2"/>
    <property type="nucleotide sequence ID" value="NM_001029350.7"/>
</dbReference>
<dbReference type="RefSeq" id="NP_001024522.1">
    <molecule id="Q19084-3"/>
    <property type="nucleotide sequence ID" value="NM_001029351.6"/>
</dbReference>
<dbReference type="RefSeq" id="NP_001033537.1">
    <molecule id="Q19084-1"/>
    <property type="nucleotide sequence ID" value="NM_001038448.5"/>
</dbReference>
<dbReference type="SMR" id="Q19084"/>
<dbReference type="STRING" id="6239.F01E11.5c.1"/>
<dbReference type="GlyCosmos" id="Q19084">
    <property type="glycosylation" value="1 site, No reported glycans"/>
</dbReference>
<dbReference type="PaxDb" id="6239-F01E11.5c"/>
<dbReference type="EnsemblMetazoa" id="F01E11.5a.1">
    <molecule id="Q19084-2"/>
    <property type="protein sequence ID" value="F01E11.5a.1"/>
    <property type="gene ID" value="WBGene00017157"/>
</dbReference>
<dbReference type="EnsemblMetazoa" id="F01E11.5b.1">
    <molecule id="Q19084-3"/>
    <property type="protein sequence ID" value="F01E11.5b.1"/>
    <property type="gene ID" value="WBGene00017157"/>
</dbReference>
<dbReference type="EnsemblMetazoa" id="F01E11.5b.2">
    <molecule id="Q19084-3"/>
    <property type="protein sequence ID" value="F01E11.5b.2"/>
    <property type="gene ID" value="WBGene00017157"/>
</dbReference>
<dbReference type="EnsemblMetazoa" id="F01E11.5c.1">
    <molecule id="Q19084-1"/>
    <property type="protein sequence ID" value="F01E11.5c.1"/>
    <property type="gene ID" value="WBGene00017157"/>
</dbReference>
<dbReference type="GeneID" id="180970"/>
<dbReference type="KEGG" id="cel:CELE_F01E11.5"/>
<dbReference type="UCSC" id="F01E11.5c">
    <molecule id="Q19084-1"/>
    <property type="organism name" value="c. elegans"/>
</dbReference>
<dbReference type="AGR" id="WB:WBGene00017157"/>
<dbReference type="CTD" id="180970"/>
<dbReference type="WormBase" id="F01E11.5a">
    <molecule id="Q19084-2"/>
    <property type="protein sequence ID" value="CE38313"/>
    <property type="gene ID" value="WBGene00017157"/>
    <property type="gene designation" value="tyra-2"/>
</dbReference>
<dbReference type="WormBase" id="F01E11.5b">
    <molecule id="Q19084-3"/>
    <property type="protein sequence ID" value="CE35711"/>
    <property type="gene ID" value="WBGene00017157"/>
    <property type="gene designation" value="tyra-2"/>
</dbReference>
<dbReference type="WormBase" id="F01E11.5c">
    <molecule id="Q19084-1"/>
    <property type="protein sequence ID" value="CE30931"/>
    <property type="gene ID" value="WBGene00017157"/>
    <property type="gene designation" value="tyra-2"/>
</dbReference>
<dbReference type="eggNOG" id="KOG3656">
    <property type="taxonomic scope" value="Eukaryota"/>
</dbReference>
<dbReference type="InParanoid" id="Q19084"/>
<dbReference type="OMA" id="AHIEMFI"/>
<dbReference type="OrthoDB" id="5957871at2759"/>
<dbReference type="PhylomeDB" id="Q19084"/>
<dbReference type="Reactome" id="R-CEL-390696">
    <property type="pathway name" value="Adrenoceptors"/>
</dbReference>
<dbReference type="Reactome" id="R-CEL-392023">
    <property type="pathway name" value="Adrenaline signalling through Alpha-2 adrenergic receptor"/>
</dbReference>
<dbReference type="Reactome" id="R-CEL-400042">
    <property type="pathway name" value="Adrenaline,noradrenaline inhibits insulin secretion"/>
</dbReference>
<dbReference type="Reactome" id="R-CEL-418594">
    <property type="pathway name" value="G alpha (i) signalling events"/>
</dbReference>
<dbReference type="Reactome" id="R-CEL-418597">
    <property type="pathway name" value="G alpha (z) signalling events"/>
</dbReference>
<dbReference type="PRO" id="PR:Q19084"/>
<dbReference type="Proteomes" id="UP000001940">
    <property type="component" value="Chromosome X"/>
</dbReference>
<dbReference type="Bgee" id="WBGene00017157">
    <property type="expression patterns" value="Expressed in larva and 4 other cell types or tissues"/>
</dbReference>
<dbReference type="GO" id="GO:0005886">
    <property type="term" value="C:plasma membrane"/>
    <property type="evidence" value="ECO:0000318"/>
    <property type="project" value="GO_Central"/>
</dbReference>
<dbReference type="GO" id="GO:0008227">
    <property type="term" value="F:G protein-coupled amine receptor activity"/>
    <property type="evidence" value="ECO:0000318"/>
    <property type="project" value="GO_Central"/>
</dbReference>
<dbReference type="CDD" id="cd14967">
    <property type="entry name" value="7tmA_amine_R-like"/>
    <property type="match status" value="1"/>
</dbReference>
<dbReference type="FunFam" id="1.20.1070.10:FF:000248">
    <property type="entry name" value="5-hydroxytryptamine receptor 1A-beta"/>
    <property type="match status" value="1"/>
</dbReference>
<dbReference type="FunFam" id="1.20.1070.10:FF:000524">
    <property type="entry name" value="Tyramine receptor tyra-2"/>
    <property type="match status" value="1"/>
</dbReference>
<dbReference type="Gene3D" id="1.20.1070.10">
    <property type="entry name" value="Rhodopsin 7-helix transmembrane proteins"/>
    <property type="match status" value="2"/>
</dbReference>
<dbReference type="InterPro" id="IPR000276">
    <property type="entry name" value="GPCR_Rhodpsn"/>
</dbReference>
<dbReference type="InterPro" id="IPR017452">
    <property type="entry name" value="GPCR_Rhodpsn_7TM"/>
</dbReference>
<dbReference type="PANTHER" id="PTHR24248">
    <property type="entry name" value="ADRENERGIC RECEPTOR-RELATED G-PROTEIN COUPLED RECEPTOR"/>
    <property type="match status" value="1"/>
</dbReference>
<dbReference type="PANTHER" id="PTHR24248:SF151">
    <property type="entry name" value="TYRAMINE RECEPTOR TYRA-2"/>
    <property type="match status" value="1"/>
</dbReference>
<dbReference type="Pfam" id="PF00001">
    <property type="entry name" value="7tm_1"/>
    <property type="match status" value="1"/>
</dbReference>
<dbReference type="PRINTS" id="PR00237">
    <property type="entry name" value="GPCRRHODOPSN"/>
</dbReference>
<dbReference type="SMART" id="SM01381">
    <property type="entry name" value="7TM_GPCR_Srsx"/>
    <property type="match status" value="1"/>
</dbReference>
<dbReference type="SUPFAM" id="SSF81321">
    <property type="entry name" value="Family A G protein-coupled receptor-like"/>
    <property type="match status" value="1"/>
</dbReference>
<dbReference type="PROSITE" id="PS00237">
    <property type="entry name" value="G_PROTEIN_RECEP_F1_1"/>
    <property type="match status" value="1"/>
</dbReference>
<dbReference type="PROSITE" id="PS50262">
    <property type="entry name" value="G_PROTEIN_RECEP_F1_2"/>
    <property type="match status" value="1"/>
</dbReference>
<reference key="1">
    <citation type="journal article" date="1998" name="Science">
        <title>Genome sequence of the nematode C. elegans: a platform for investigating biology.</title>
        <authorList>
            <consortium name="The C. elegans sequencing consortium"/>
        </authorList>
    </citation>
    <scope>NUCLEOTIDE SEQUENCE [LARGE SCALE GENOMIC DNA]</scope>
    <scope>ALTERNATIVE SPLICING</scope>
    <source>
        <strain>Bristol N2</strain>
    </source>
</reference>
<reference key="2">
    <citation type="journal article" date="2005" name="J. Neurochem.">
        <title>TYRA-2 (F01E11.5): a Caenorhabditis elegans tyramine receptor expressed in the MC and NSM pharyngeal neurons.</title>
        <authorList>
            <person name="Rex E."/>
            <person name="Hapiak V."/>
            <person name="Hobson R."/>
            <person name="Smith K."/>
            <person name="Xiao H."/>
            <person name="Komuniecki R."/>
        </authorList>
    </citation>
    <scope>FUNCTION</scope>
    <scope>TISSUE SPECIFICITY</scope>
</reference>
<keyword id="KW-0025">Alternative splicing</keyword>
<keyword id="KW-1003">Cell membrane</keyword>
<keyword id="KW-1015">Disulfide bond</keyword>
<keyword id="KW-0297">G-protein coupled receptor</keyword>
<keyword id="KW-0325">Glycoprotein</keyword>
<keyword id="KW-0472">Membrane</keyword>
<keyword id="KW-0675">Receptor</keyword>
<keyword id="KW-1185">Reference proteome</keyword>
<keyword id="KW-0807">Transducer</keyword>
<keyword id="KW-0812">Transmembrane</keyword>
<keyword id="KW-1133">Transmembrane helix</keyword>
<gene>
    <name type="primary">tyra-2</name>
    <name type="ORF">F01E11.5</name>
</gene>
<name>OAR2_CAEEL</name>
<proteinExistence type="evidence at transcript level"/>
<protein>
    <recommendedName>
        <fullName>Tyramine receptor tyra-2</fullName>
    </recommendedName>
</protein>
<feature type="chain" id="PRO_0000070223" description="Tyramine receptor tyra-2">
    <location>
        <begin position="1"/>
        <end position="468"/>
    </location>
</feature>
<feature type="topological domain" description="Extracellular" evidence="1">
    <location>
        <begin position="1"/>
        <end position="23"/>
    </location>
</feature>
<feature type="transmembrane region" description="Helical; Name=1" evidence="1">
    <location>
        <begin position="24"/>
        <end position="43"/>
    </location>
</feature>
<feature type="topological domain" description="Cytoplasmic" evidence="1">
    <location>
        <begin position="44"/>
        <end position="54"/>
    </location>
</feature>
<feature type="transmembrane region" description="Helical; Name=2" evidence="1">
    <location>
        <begin position="55"/>
        <end position="77"/>
    </location>
</feature>
<feature type="topological domain" description="Extracellular" evidence="1">
    <location>
        <begin position="78"/>
        <end position="91"/>
    </location>
</feature>
<feature type="transmembrane region" description="Helical; Name=3" evidence="1">
    <location>
        <begin position="92"/>
        <end position="114"/>
    </location>
</feature>
<feature type="topological domain" description="Cytoplasmic" evidence="1">
    <location>
        <begin position="115"/>
        <end position="134"/>
    </location>
</feature>
<feature type="transmembrane region" description="Helical; Name=4" evidence="1">
    <location>
        <begin position="135"/>
        <end position="157"/>
    </location>
</feature>
<feature type="topological domain" description="Extracellular" evidence="1">
    <location>
        <begin position="158"/>
        <end position="186"/>
    </location>
</feature>
<feature type="transmembrane region" description="Helical; Name=5" evidence="1">
    <location>
        <begin position="187"/>
        <end position="209"/>
    </location>
</feature>
<feature type="topological domain" description="Cytoplasmic" evidence="1">
    <location>
        <begin position="210"/>
        <end position="387"/>
    </location>
</feature>
<feature type="transmembrane region" description="Helical; Name=6" evidence="1">
    <location>
        <begin position="388"/>
        <end position="410"/>
    </location>
</feature>
<feature type="topological domain" description="Extracellular" evidence="1">
    <location>
        <begin position="411"/>
        <end position="424"/>
    </location>
</feature>
<feature type="transmembrane region" description="Helical; Name=7" evidence="1">
    <location>
        <begin position="425"/>
        <end position="444"/>
    </location>
</feature>
<feature type="topological domain" description="Cytoplasmic" evidence="1">
    <location>
        <begin position="445"/>
        <end position="468"/>
    </location>
</feature>
<feature type="region of interest" description="Disordered" evidence="3">
    <location>
        <begin position="252"/>
        <end position="306"/>
    </location>
</feature>
<feature type="compositionally biased region" description="Acidic residues" evidence="3">
    <location>
        <begin position="255"/>
        <end position="265"/>
    </location>
</feature>
<feature type="compositionally biased region" description="Acidic residues" evidence="3">
    <location>
        <begin position="281"/>
        <end position="292"/>
    </location>
</feature>
<feature type="glycosylation site" description="N-linked (GlcNAc...) asparagine" evidence="1">
    <location>
        <position position="171"/>
    </location>
</feature>
<feature type="disulfide bond" evidence="2">
    <location>
        <begin position="91"/>
        <end position="177"/>
    </location>
</feature>
<feature type="splice variant" id="VSP_018117" description="In isoform b." evidence="5">
    <location>
        <begin position="1"/>
        <end position="126"/>
    </location>
</feature>
<feature type="splice variant" id="VSP_018118" description="In isoform a." evidence="5">
    <location>
        <begin position="225"/>
        <end position="230"/>
    </location>
</feature>
<sequence length="468" mass="53051">MMSSYVMSPVDETYTLFQILKGSALFLLVLWTIFANSLVFIVLYKNPRLQTVPNLLVGNLAFSDLALGLIVLPLSSVYAIAGEWVFPDALCEVFVSADILCSTASIWNLSIVGLDRYWAITSPVAYMSKRNKRTAGIMILSVWISSALISLAPLLGWKQTAQTPNLIYEKNNTVRQCTFLDLPSYTVYSATGSFFIPTLLMFFVYFKIYQAFAKHRARQIYRQKLAVSSHVIRKHIESTILHEISHVLPTSDEFAKEEEEEEDSESSGQVENGLGNGNDAIIEEDECEDEDSDEKRDDHTSMTTVTATVTGPTEAPYMKREAKISKSVPIEKESAIQKREAKPMRSVMAISYEKVKRHKNRKERIYRKSLQRKPKAISAAKERRGVKVLGIILGCFTVCWAPFFTMYVLVQFCKDCSPNAHIEMFITWLGYSNSAMNPIIYTVFNRDYQIALKRLFTSEKKPSSTSRV</sequence>